<proteinExistence type="inferred from homology"/>
<protein>
    <recommendedName>
        <fullName evidence="1">Elongation factor 4</fullName>
        <shortName evidence="1">EF-4</shortName>
        <ecNumber evidence="1">3.6.5.n1</ecNumber>
    </recommendedName>
    <alternativeName>
        <fullName evidence="1">Ribosomal back-translocase LepA</fullName>
    </alternativeName>
</protein>
<name>LEPA_CALS8</name>
<sequence length="602" mass="68040">MERRQDRIRNFCIIAHIDHGKSTLADRIIELTGALSEREMQDQVLDTMEIERERGITIKAQAVRLNYKAKDGKEYIFHLIDTPGHVDFTYEVSRSLAACEGAILVVDATQGIEAQTLANVYLALEHNLEIIPVINKIDLPSARPDEVKKEIEDVIGLDASDAPLISAKQGINIEEVLERIVRDIPPPKGDDTKPLKALIFDSLYDNYKGVLAYVRVFDGVVKPNMTIKMMSTGAQFTVTEVGYFKPGMLIPCEELRAGDVGYIAASIKTVRDTRVGDTITDANNPADEPLPGFRKLNPMVFCGIYPTGDTKYEELKEALEKLQLNDAALFFEPESSAALGFGFRCGFLGLLHMEIVQERLEREYDLNIITTAPSVVYRVTKTNGEVLYIDNPTKLPPPNEIDKMEEPMVKATIMVPNEYVGAIMELCQERRGIFKDMSYIETTRVILTYEMPLMEIVYDFFDALKSRSKGYASFDYEFIGYAESNLVKLDIMIKGEVVDALSFIVHRDKAYQRARKIVEKLKEEIPRHLFEIPIQACIGSKVIARETVKALRKDVLAKCYGGDVTRKKKLLEKQKEGKKRMKQIGEVEIPQEAFMAVLKLEE</sequence>
<reference key="1">
    <citation type="submission" date="2007-04" db="EMBL/GenBank/DDBJ databases">
        <title>Genome sequence of the thermophilic hydrogen-producing bacterium Caldicellulosiruptor saccharolyticus DSM 8903.</title>
        <authorList>
            <person name="Copeland A."/>
            <person name="Lucas S."/>
            <person name="Lapidus A."/>
            <person name="Barry K."/>
            <person name="Detter J.C."/>
            <person name="Glavina del Rio T."/>
            <person name="Hammon N."/>
            <person name="Israni S."/>
            <person name="Dalin E."/>
            <person name="Tice H."/>
            <person name="Pitluck S."/>
            <person name="Kiss H."/>
            <person name="Brettin T."/>
            <person name="Bruce D."/>
            <person name="Han C."/>
            <person name="Schmutz J."/>
            <person name="Larimer F."/>
            <person name="Land M."/>
            <person name="Hauser L."/>
            <person name="Kyrpides N."/>
            <person name="Lykidis A."/>
            <person name="van de Werken H.J.G."/>
            <person name="Verhaart M.R.A."/>
            <person name="VanFossen A.L."/>
            <person name="Lewis D.L."/>
            <person name="Nichols J.D."/>
            <person name="Goorissen H.P."/>
            <person name="van Niel E.W.J."/>
            <person name="Stams F.J.M."/>
            <person name="Willquist K.U."/>
            <person name="Ward D.E."/>
            <person name="van der Oost J."/>
            <person name="Kelly R.M."/>
            <person name="Kengen S.M.W."/>
            <person name="Richardson P."/>
        </authorList>
    </citation>
    <scope>NUCLEOTIDE SEQUENCE [LARGE SCALE GENOMIC DNA]</scope>
    <source>
        <strain>ATCC 43494 / DSM 8903 / Tp8T 6331</strain>
    </source>
</reference>
<feature type="chain" id="PRO_1000031980" description="Elongation factor 4">
    <location>
        <begin position="1"/>
        <end position="602"/>
    </location>
</feature>
<feature type="domain" description="tr-type G">
    <location>
        <begin position="6"/>
        <end position="188"/>
    </location>
</feature>
<feature type="binding site" evidence="1">
    <location>
        <begin position="18"/>
        <end position="23"/>
    </location>
    <ligand>
        <name>GTP</name>
        <dbReference type="ChEBI" id="CHEBI:37565"/>
    </ligand>
</feature>
<feature type="binding site" evidence="1">
    <location>
        <begin position="135"/>
        <end position="138"/>
    </location>
    <ligand>
        <name>GTP</name>
        <dbReference type="ChEBI" id="CHEBI:37565"/>
    </ligand>
</feature>
<keyword id="KW-1003">Cell membrane</keyword>
<keyword id="KW-0342">GTP-binding</keyword>
<keyword id="KW-0378">Hydrolase</keyword>
<keyword id="KW-0472">Membrane</keyword>
<keyword id="KW-0547">Nucleotide-binding</keyword>
<keyword id="KW-0648">Protein biosynthesis</keyword>
<gene>
    <name evidence="1" type="primary">lepA</name>
    <name type="ordered locus">Csac_1748</name>
</gene>
<evidence type="ECO:0000255" key="1">
    <source>
        <dbReference type="HAMAP-Rule" id="MF_00071"/>
    </source>
</evidence>
<dbReference type="EC" id="3.6.5.n1" evidence="1"/>
<dbReference type="EMBL" id="CP000679">
    <property type="protein sequence ID" value="ABP67335.1"/>
    <property type="molecule type" value="Genomic_DNA"/>
</dbReference>
<dbReference type="RefSeq" id="WP_011917269.1">
    <property type="nucleotide sequence ID" value="NC_009437.1"/>
</dbReference>
<dbReference type="SMR" id="A4XKA0"/>
<dbReference type="STRING" id="351627.Csac_1748"/>
<dbReference type="KEGG" id="csc:Csac_1748"/>
<dbReference type="eggNOG" id="COG0481">
    <property type="taxonomic scope" value="Bacteria"/>
</dbReference>
<dbReference type="HOGENOM" id="CLU_009995_3_3_9"/>
<dbReference type="OrthoDB" id="9801591at2"/>
<dbReference type="Proteomes" id="UP000000256">
    <property type="component" value="Chromosome"/>
</dbReference>
<dbReference type="GO" id="GO:0005886">
    <property type="term" value="C:plasma membrane"/>
    <property type="evidence" value="ECO:0007669"/>
    <property type="project" value="UniProtKB-SubCell"/>
</dbReference>
<dbReference type="GO" id="GO:0005525">
    <property type="term" value="F:GTP binding"/>
    <property type="evidence" value="ECO:0007669"/>
    <property type="project" value="UniProtKB-UniRule"/>
</dbReference>
<dbReference type="GO" id="GO:0003924">
    <property type="term" value="F:GTPase activity"/>
    <property type="evidence" value="ECO:0007669"/>
    <property type="project" value="UniProtKB-UniRule"/>
</dbReference>
<dbReference type="GO" id="GO:0043022">
    <property type="term" value="F:ribosome binding"/>
    <property type="evidence" value="ECO:0007669"/>
    <property type="project" value="UniProtKB-UniRule"/>
</dbReference>
<dbReference type="GO" id="GO:0003746">
    <property type="term" value="F:translation elongation factor activity"/>
    <property type="evidence" value="ECO:0007669"/>
    <property type="project" value="UniProtKB-UniRule"/>
</dbReference>
<dbReference type="GO" id="GO:0045727">
    <property type="term" value="P:positive regulation of translation"/>
    <property type="evidence" value="ECO:0007669"/>
    <property type="project" value="UniProtKB-UniRule"/>
</dbReference>
<dbReference type="CDD" id="cd03699">
    <property type="entry name" value="EF4_II"/>
    <property type="match status" value="1"/>
</dbReference>
<dbReference type="CDD" id="cd16260">
    <property type="entry name" value="EF4_III"/>
    <property type="match status" value="1"/>
</dbReference>
<dbReference type="CDD" id="cd01890">
    <property type="entry name" value="LepA"/>
    <property type="match status" value="1"/>
</dbReference>
<dbReference type="CDD" id="cd03709">
    <property type="entry name" value="lepA_C"/>
    <property type="match status" value="1"/>
</dbReference>
<dbReference type="FunFam" id="3.40.50.300:FF:000078">
    <property type="entry name" value="Elongation factor 4"/>
    <property type="match status" value="1"/>
</dbReference>
<dbReference type="FunFam" id="2.40.30.10:FF:000015">
    <property type="entry name" value="Translation factor GUF1, mitochondrial"/>
    <property type="match status" value="1"/>
</dbReference>
<dbReference type="FunFam" id="3.30.70.240:FF:000007">
    <property type="entry name" value="Translation factor GUF1, mitochondrial"/>
    <property type="match status" value="1"/>
</dbReference>
<dbReference type="FunFam" id="3.30.70.2570:FF:000001">
    <property type="entry name" value="Translation factor GUF1, mitochondrial"/>
    <property type="match status" value="1"/>
</dbReference>
<dbReference type="FunFam" id="3.30.70.870:FF:000004">
    <property type="entry name" value="Translation factor GUF1, mitochondrial"/>
    <property type="match status" value="1"/>
</dbReference>
<dbReference type="Gene3D" id="3.30.70.240">
    <property type="match status" value="1"/>
</dbReference>
<dbReference type="Gene3D" id="3.30.70.2570">
    <property type="entry name" value="Elongation factor 4, C-terminal domain"/>
    <property type="match status" value="1"/>
</dbReference>
<dbReference type="Gene3D" id="3.30.70.870">
    <property type="entry name" value="Elongation Factor G (Translational Gtpase), domain 3"/>
    <property type="match status" value="1"/>
</dbReference>
<dbReference type="Gene3D" id="3.40.50.300">
    <property type="entry name" value="P-loop containing nucleotide triphosphate hydrolases"/>
    <property type="match status" value="1"/>
</dbReference>
<dbReference type="Gene3D" id="2.40.30.10">
    <property type="entry name" value="Translation factors"/>
    <property type="match status" value="1"/>
</dbReference>
<dbReference type="HAMAP" id="MF_00071">
    <property type="entry name" value="LepA"/>
    <property type="match status" value="1"/>
</dbReference>
<dbReference type="InterPro" id="IPR006297">
    <property type="entry name" value="EF-4"/>
</dbReference>
<dbReference type="InterPro" id="IPR035647">
    <property type="entry name" value="EFG_III/V"/>
</dbReference>
<dbReference type="InterPro" id="IPR000640">
    <property type="entry name" value="EFG_V-like"/>
</dbReference>
<dbReference type="InterPro" id="IPR004161">
    <property type="entry name" value="EFTu-like_2"/>
</dbReference>
<dbReference type="InterPro" id="IPR031157">
    <property type="entry name" value="G_TR_CS"/>
</dbReference>
<dbReference type="InterPro" id="IPR038363">
    <property type="entry name" value="LepA_C_sf"/>
</dbReference>
<dbReference type="InterPro" id="IPR013842">
    <property type="entry name" value="LepA_CTD"/>
</dbReference>
<dbReference type="InterPro" id="IPR035654">
    <property type="entry name" value="LepA_IV"/>
</dbReference>
<dbReference type="InterPro" id="IPR027417">
    <property type="entry name" value="P-loop_NTPase"/>
</dbReference>
<dbReference type="InterPro" id="IPR005225">
    <property type="entry name" value="Small_GTP-bd"/>
</dbReference>
<dbReference type="InterPro" id="IPR000795">
    <property type="entry name" value="T_Tr_GTP-bd_dom"/>
</dbReference>
<dbReference type="InterPro" id="IPR009000">
    <property type="entry name" value="Transl_B-barrel_sf"/>
</dbReference>
<dbReference type="NCBIfam" id="TIGR01393">
    <property type="entry name" value="lepA"/>
    <property type="match status" value="1"/>
</dbReference>
<dbReference type="NCBIfam" id="TIGR00231">
    <property type="entry name" value="small_GTP"/>
    <property type="match status" value="1"/>
</dbReference>
<dbReference type="PANTHER" id="PTHR43512:SF4">
    <property type="entry name" value="TRANSLATION FACTOR GUF1 HOMOLOG, CHLOROPLASTIC"/>
    <property type="match status" value="1"/>
</dbReference>
<dbReference type="PANTHER" id="PTHR43512">
    <property type="entry name" value="TRANSLATION FACTOR GUF1-RELATED"/>
    <property type="match status" value="1"/>
</dbReference>
<dbReference type="Pfam" id="PF00679">
    <property type="entry name" value="EFG_C"/>
    <property type="match status" value="1"/>
</dbReference>
<dbReference type="Pfam" id="PF00009">
    <property type="entry name" value="GTP_EFTU"/>
    <property type="match status" value="1"/>
</dbReference>
<dbReference type="Pfam" id="PF03144">
    <property type="entry name" value="GTP_EFTU_D2"/>
    <property type="match status" value="1"/>
</dbReference>
<dbReference type="Pfam" id="PF06421">
    <property type="entry name" value="LepA_C"/>
    <property type="match status" value="1"/>
</dbReference>
<dbReference type="PRINTS" id="PR00315">
    <property type="entry name" value="ELONGATNFCT"/>
</dbReference>
<dbReference type="SMART" id="SM00838">
    <property type="entry name" value="EFG_C"/>
    <property type="match status" value="1"/>
</dbReference>
<dbReference type="SUPFAM" id="SSF54980">
    <property type="entry name" value="EF-G C-terminal domain-like"/>
    <property type="match status" value="2"/>
</dbReference>
<dbReference type="SUPFAM" id="SSF52540">
    <property type="entry name" value="P-loop containing nucleoside triphosphate hydrolases"/>
    <property type="match status" value="1"/>
</dbReference>
<dbReference type="SUPFAM" id="SSF50447">
    <property type="entry name" value="Translation proteins"/>
    <property type="match status" value="1"/>
</dbReference>
<dbReference type="PROSITE" id="PS00301">
    <property type="entry name" value="G_TR_1"/>
    <property type="match status" value="1"/>
</dbReference>
<dbReference type="PROSITE" id="PS51722">
    <property type="entry name" value="G_TR_2"/>
    <property type="match status" value="1"/>
</dbReference>
<accession>A4XKA0</accession>
<comment type="function">
    <text evidence="1">Required for accurate and efficient protein synthesis under certain stress conditions. May act as a fidelity factor of the translation reaction, by catalyzing a one-codon backward translocation of tRNAs on improperly translocated ribosomes. Back-translocation proceeds from a post-translocation (POST) complex to a pre-translocation (PRE) complex, thus giving elongation factor G a second chance to translocate the tRNAs correctly. Binds to ribosomes in a GTP-dependent manner.</text>
</comment>
<comment type="catalytic activity">
    <reaction evidence="1">
        <text>GTP + H2O = GDP + phosphate + H(+)</text>
        <dbReference type="Rhea" id="RHEA:19669"/>
        <dbReference type="ChEBI" id="CHEBI:15377"/>
        <dbReference type="ChEBI" id="CHEBI:15378"/>
        <dbReference type="ChEBI" id="CHEBI:37565"/>
        <dbReference type="ChEBI" id="CHEBI:43474"/>
        <dbReference type="ChEBI" id="CHEBI:58189"/>
        <dbReference type="EC" id="3.6.5.n1"/>
    </reaction>
</comment>
<comment type="subcellular location">
    <subcellularLocation>
        <location evidence="1">Cell membrane</location>
        <topology evidence="1">Peripheral membrane protein</topology>
        <orientation evidence="1">Cytoplasmic side</orientation>
    </subcellularLocation>
</comment>
<comment type="similarity">
    <text evidence="1">Belongs to the TRAFAC class translation factor GTPase superfamily. Classic translation factor GTPase family. LepA subfamily.</text>
</comment>
<organism>
    <name type="scientific">Caldicellulosiruptor saccharolyticus (strain ATCC 43494 / DSM 8903 / Tp8T 6331)</name>
    <dbReference type="NCBI Taxonomy" id="351627"/>
    <lineage>
        <taxon>Bacteria</taxon>
        <taxon>Bacillati</taxon>
        <taxon>Bacillota</taxon>
        <taxon>Bacillota incertae sedis</taxon>
        <taxon>Caldicellulosiruptorales</taxon>
        <taxon>Caldicellulosiruptoraceae</taxon>
        <taxon>Caldicellulosiruptor</taxon>
    </lineage>
</organism>